<proteinExistence type="inferred from homology"/>
<comment type="function">
    <text evidence="1">An accessory protein needed during the final step in the assembly of 30S ribosomal subunit, possibly for assembly of the head region. Essential for efficient processing of 16S rRNA. May be needed both before and after RbfA during the maturation of 16S rRNA. It has affinity for free ribosomal 30S subunits but not for 70S ribosomes.</text>
</comment>
<comment type="subunit">
    <text evidence="1">Binds ribosomal protein uS19.</text>
</comment>
<comment type="subcellular location">
    <subcellularLocation>
        <location evidence="1">Cytoplasm</location>
    </subcellularLocation>
</comment>
<comment type="domain">
    <text evidence="1">The PRC barrel domain binds ribosomal protein uS19.</text>
</comment>
<comment type="similarity">
    <text evidence="1">Belongs to the RimM family.</text>
</comment>
<feature type="chain" id="PRO_1000089492" description="Ribosome maturation factor RimM">
    <location>
        <begin position="1"/>
        <end position="165"/>
    </location>
</feature>
<feature type="domain" description="PRC barrel" evidence="1">
    <location>
        <begin position="89"/>
        <end position="161"/>
    </location>
</feature>
<accession>B2V4E4</accession>
<reference key="1">
    <citation type="submission" date="2008-05" db="EMBL/GenBank/DDBJ databases">
        <title>Complete genome sequence of Clostridium botulinum E3 str. Alaska E43.</title>
        <authorList>
            <person name="Brinkac L.M."/>
            <person name="Brown J.L."/>
            <person name="Bruce D."/>
            <person name="Detter C."/>
            <person name="Munk C."/>
            <person name="Smith L.A."/>
            <person name="Smith T.J."/>
            <person name="Sutton G."/>
            <person name="Brettin T.S."/>
        </authorList>
    </citation>
    <scope>NUCLEOTIDE SEQUENCE [LARGE SCALE GENOMIC DNA]</scope>
    <source>
        <strain>Alaska E43 / Type E3</strain>
    </source>
</reference>
<gene>
    <name evidence="1" type="primary">rimM</name>
    <name type="ordered locus">CLH_1199</name>
</gene>
<dbReference type="EMBL" id="CP001078">
    <property type="protein sequence ID" value="ACD51918.1"/>
    <property type="molecule type" value="Genomic_DNA"/>
</dbReference>
<dbReference type="RefSeq" id="WP_012450174.1">
    <property type="nucleotide sequence ID" value="NC_010723.1"/>
</dbReference>
<dbReference type="SMR" id="B2V4E4"/>
<dbReference type="KEGG" id="cbt:CLH_1199"/>
<dbReference type="HOGENOM" id="CLU_077636_3_2_9"/>
<dbReference type="GO" id="GO:0005737">
    <property type="term" value="C:cytoplasm"/>
    <property type="evidence" value="ECO:0007669"/>
    <property type="project" value="UniProtKB-SubCell"/>
</dbReference>
<dbReference type="GO" id="GO:0005840">
    <property type="term" value="C:ribosome"/>
    <property type="evidence" value="ECO:0007669"/>
    <property type="project" value="InterPro"/>
</dbReference>
<dbReference type="GO" id="GO:0043022">
    <property type="term" value="F:ribosome binding"/>
    <property type="evidence" value="ECO:0007669"/>
    <property type="project" value="InterPro"/>
</dbReference>
<dbReference type="GO" id="GO:0042274">
    <property type="term" value="P:ribosomal small subunit biogenesis"/>
    <property type="evidence" value="ECO:0007669"/>
    <property type="project" value="UniProtKB-UniRule"/>
</dbReference>
<dbReference type="GO" id="GO:0006364">
    <property type="term" value="P:rRNA processing"/>
    <property type="evidence" value="ECO:0007669"/>
    <property type="project" value="UniProtKB-UniRule"/>
</dbReference>
<dbReference type="Gene3D" id="2.30.30.240">
    <property type="entry name" value="PRC-barrel domain"/>
    <property type="match status" value="1"/>
</dbReference>
<dbReference type="Gene3D" id="2.40.30.60">
    <property type="entry name" value="RimM"/>
    <property type="match status" value="1"/>
</dbReference>
<dbReference type="HAMAP" id="MF_00014">
    <property type="entry name" value="Ribosome_mat_RimM"/>
    <property type="match status" value="1"/>
</dbReference>
<dbReference type="InterPro" id="IPR011033">
    <property type="entry name" value="PRC_barrel-like_sf"/>
</dbReference>
<dbReference type="InterPro" id="IPR056792">
    <property type="entry name" value="PRC_RimM"/>
</dbReference>
<dbReference type="InterPro" id="IPR011961">
    <property type="entry name" value="RimM"/>
</dbReference>
<dbReference type="InterPro" id="IPR002676">
    <property type="entry name" value="RimM_N"/>
</dbReference>
<dbReference type="InterPro" id="IPR036976">
    <property type="entry name" value="RimM_N_sf"/>
</dbReference>
<dbReference type="InterPro" id="IPR009000">
    <property type="entry name" value="Transl_B-barrel_sf"/>
</dbReference>
<dbReference type="NCBIfam" id="TIGR02273">
    <property type="entry name" value="16S_RimM"/>
    <property type="match status" value="1"/>
</dbReference>
<dbReference type="PANTHER" id="PTHR33692">
    <property type="entry name" value="RIBOSOME MATURATION FACTOR RIMM"/>
    <property type="match status" value="1"/>
</dbReference>
<dbReference type="PANTHER" id="PTHR33692:SF1">
    <property type="entry name" value="RIBOSOME MATURATION FACTOR RIMM"/>
    <property type="match status" value="1"/>
</dbReference>
<dbReference type="Pfam" id="PF24986">
    <property type="entry name" value="PRC_RimM"/>
    <property type="match status" value="1"/>
</dbReference>
<dbReference type="Pfam" id="PF01782">
    <property type="entry name" value="RimM"/>
    <property type="match status" value="1"/>
</dbReference>
<dbReference type="SUPFAM" id="SSF50346">
    <property type="entry name" value="PRC-barrel domain"/>
    <property type="match status" value="1"/>
</dbReference>
<dbReference type="SUPFAM" id="SSF50447">
    <property type="entry name" value="Translation proteins"/>
    <property type="match status" value="1"/>
</dbReference>
<keyword id="KW-0143">Chaperone</keyword>
<keyword id="KW-0963">Cytoplasm</keyword>
<keyword id="KW-0690">Ribosome biogenesis</keyword>
<keyword id="KW-0698">rRNA processing</keyword>
<sequence>MEEIFKIGQIVNTHGIKGEVKVYPLTEDVNKFKKLKTVLIDGEHRNIQSVKFQKDRVILKIEGIDTMNDAETYKQKYIEIFRSNAPELEADTHYIVDLIGCMVYDADNMELGKIFDVISTPSNDVYWIKQPKELLIPVLKDIVLDIDIENKKIVVKPVRQWQDED</sequence>
<evidence type="ECO:0000255" key="1">
    <source>
        <dbReference type="HAMAP-Rule" id="MF_00014"/>
    </source>
</evidence>
<organism>
    <name type="scientific">Clostridium botulinum (strain Alaska E43 / Type E3)</name>
    <dbReference type="NCBI Taxonomy" id="508767"/>
    <lineage>
        <taxon>Bacteria</taxon>
        <taxon>Bacillati</taxon>
        <taxon>Bacillota</taxon>
        <taxon>Clostridia</taxon>
        <taxon>Eubacteriales</taxon>
        <taxon>Clostridiaceae</taxon>
        <taxon>Clostridium</taxon>
    </lineage>
</organism>
<name>RIMM_CLOBA</name>
<protein>
    <recommendedName>
        <fullName evidence="1">Ribosome maturation factor RimM</fullName>
    </recommendedName>
</protein>